<gene>
    <name type="ORF">V2</name>
</gene>
<organism>
    <name type="scientific">Tomato yellow leaf curl Sardinia virus (isolate Spain-2)</name>
    <name type="common">TYLCSV</name>
    <dbReference type="NCBI Taxonomy" id="221538"/>
    <lineage>
        <taxon>Viruses</taxon>
        <taxon>Monodnaviria</taxon>
        <taxon>Shotokuvirae</taxon>
        <taxon>Cressdnaviricota</taxon>
        <taxon>Repensiviricetes</taxon>
        <taxon>Geplafuvirales</taxon>
        <taxon>Geminiviridae</taxon>
        <taxon>Begomovirus</taxon>
        <taxon>Tomato yellow leaf curl Sardinia virus</taxon>
    </lineage>
</organism>
<accession>Q67616</accession>
<comment type="function">
    <text evidence="1">Through its interaction with host SGS3, acts as a suppressor of RNA-mediated gene silencing, also known as post-transcriptional gene silencing (PTGS), a mechanism of plant viral defense that limits the accumulation of viral RNAs.</text>
</comment>
<comment type="subunit">
    <text evidence="1">Interacts with host SGS3.</text>
</comment>
<comment type="subcellular location">
    <subcellularLocation>
        <location evidence="1">Host cytoplasm</location>
        <location evidence="1">Host perinuclear region</location>
    </subcellularLocation>
    <text evidence="1">Accumulates in inclusion bodies in the cell periphery. May interact with the ER network from the perinuclear region out to the cell periphery (By similarity).</text>
</comment>
<comment type="similarity">
    <text evidence="2">Belongs to the geminiviridae protein AV2/V2 family.</text>
</comment>
<name>AV2_TYCS2</name>
<dbReference type="EMBL" id="L27708">
    <property type="protein sequence ID" value="AAA47951.1"/>
    <property type="molecule type" value="Genomic_DNA"/>
</dbReference>
<dbReference type="Proteomes" id="UP000008266">
    <property type="component" value="Genome"/>
</dbReference>
<dbReference type="GO" id="GO:0044220">
    <property type="term" value="C:host cell perinuclear region of cytoplasm"/>
    <property type="evidence" value="ECO:0007669"/>
    <property type="project" value="UniProtKB-SubCell"/>
</dbReference>
<dbReference type="GO" id="GO:0060967">
    <property type="term" value="P:negative regulation of gene silencing by regulatory ncRNA"/>
    <property type="evidence" value="ECO:0007669"/>
    <property type="project" value="InterPro"/>
</dbReference>
<dbReference type="GO" id="GO:0052170">
    <property type="term" value="P:symbiont-mediated suppression of host innate immune response"/>
    <property type="evidence" value="ECO:0007669"/>
    <property type="project" value="UniProtKB-KW"/>
</dbReference>
<dbReference type="InterPro" id="IPR002511">
    <property type="entry name" value="Gemini_V2"/>
</dbReference>
<dbReference type="InterPro" id="IPR005159">
    <property type="entry name" value="WCCH"/>
</dbReference>
<dbReference type="Pfam" id="PF01524">
    <property type="entry name" value="Gemini_V2"/>
    <property type="match status" value="1"/>
</dbReference>
<dbReference type="Pfam" id="PF03716">
    <property type="entry name" value="WCCH"/>
    <property type="match status" value="1"/>
</dbReference>
<reference key="1">
    <citation type="submission" date="1994-01" db="EMBL/GenBank/DDBJ databases">
        <title>Characterization of a tomato yellow leaf curl virus isolated from southeast Spain (almeria).</title>
        <authorList>
            <person name="Reina J."/>
            <person name="Cuadrado-Gomez I.M."/>
            <person name="Jimenez J."/>
            <person name="Bejarano E.R."/>
        </authorList>
    </citation>
    <scope>NUCLEOTIDE SEQUENCE [GENOMIC DNA]</scope>
</reference>
<sequence length="115" mass="13200">MWDPLLNEFPDSVHGLRCMLAIKYLQLVEETYEPNTLGHDLIRDLISVIRARDYAEANRRYTNVKPALEVSSKTELRQPVYQPCCCPHCPRHQASIMDLQAHVSKAADVQNVQKP</sequence>
<keyword id="KW-1035">Host cytoplasm</keyword>
<keyword id="KW-0945">Host-virus interaction</keyword>
<keyword id="KW-1090">Inhibition of host innate immune response by virus</keyword>
<keyword id="KW-0941">Suppressor of RNA silencing</keyword>
<keyword id="KW-0899">Viral immunoevasion</keyword>
<organismHost>
    <name type="scientific">Solanum lycopersicum</name>
    <name type="common">Tomato</name>
    <name type="synonym">Lycopersicon esculentum</name>
    <dbReference type="NCBI Taxonomy" id="4081"/>
</organismHost>
<evidence type="ECO:0000250" key="1"/>
<evidence type="ECO:0000305" key="2"/>
<protein>
    <recommendedName>
        <fullName>Protein V2</fullName>
    </recommendedName>
</protein>
<feature type="chain" id="PRO_0000323701" description="Protein V2">
    <location>
        <begin position="1"/>
        <end position="115"/>
    </location>
</feature>
<proteinExistence type="inferred from homology"/>